<accession>P23907</accession>
<accession>Q5ECG0</accession>
<accession>Q6V638</accession>
<accession>Q6V654</accession>
<accession>Q712V9</accession>
<accession>Q712W2</accession>
<accession>Q712W3</accession>
<accession>Q7JGT4</accession>
<sequence length="256" mass="27915">MVKSHIGSWILVLFVAMWSDVGLCKKRPKPGGGWNTGGSRYPGQGSPGGNRYPPQGGGGWGQPHGGGWGQPHGGGWGQPHGGGWGQPHGGGGWGQGGSHSQWNKPSKPKTNMKHVAGAAAAGAVVGGLGGYMLGSAMSRPLIHFGNDYEDRYYRENMYRYPNQVYYRPVDRYSNQNNFVHDCVNITVKQHTVTTTTKGENFTETDIKIMERVVEQMCITQYQRESQAYYQRGASVILFSSPPVILLISFLIFLIVG</sequence>
<feature type="signal peptide">
    <location>
        <begin position="1"/>
        <end position="24"/>
    </location>
</feature>
<feature type="chain" id="PRO_0000025727" description="Major prion protein">
    <location>
        <begin position="25"/>
        <end position="233"/>
    </location>
</feature>
<feature type="propeptide" id="PRO_0000025728" description="Removed in mature form" evidence="4">
    <location>
        <begin position="234"/>
        <end position="256"/>
    </location>
</feature>
<feature type="repeat" description="1">
    <location>
        <begin position="54"/>
        <end position="62"/>
    </location>
</feature>
<feature type="repeat" description="2">
    <location>
        <begin position="63"/>
        <end position="70"/>
    </location>
</feature>
<feature type="repeat" description="3">
    <location>
        <begin position="71"/>
        <end position="78"/>
    </location>
</feature>
<feature type="repeat" description="4">
    <location>
        <begin position="79"/>
        <end position="86"/>
    </location>
</feature>
<feature type="repeat" description="5">
    <location>
        <begin position="87"/>
        <end position="95"/>
    </location>
</feature>
<feature type="region of interest" description="Interaction with GRB2, ERI3 and SYN1" evidence="3">
    <location>
        <begin position="25"/>
        <end position="233"/>
    </location>
</feature>
<feature type="region of interest" description="Disordered" evidence="5">
    <location>
        <begin position="28"/>
        <end position="110"/>
    </location>
</feature>
<feature type="region of interest" description="5 X 8 AA tandem repeats of P-H-G-G-G-W-G-Q">
    <location>
        <begin position="54"/>
        <end position="95"/>
    </location>
</feature>
<feature type="compositionally biased region" description="Gly residues" evidence="5">
    <location>
        <begin position="55"/>
        <end position="97"/>
    </location>
</feature>
<feature type="binding site" evidence="2">
    <location>
        <position position="64"/>
    </location>
    <ligand>
        <name>Cu(2+)</name>
        <dbReference type="ChEBI" id="CHEBI:29036"/>
        <label>1</label>
    </ligand>
</feature>
<feature type="binding site" evidence="2">
    <location>
        <position position="65"/>
    </location>
    <ligand>
        <name>Cu(2+)</name>
        <dbReference type="ChEBI" id="CHEBI:29036"/>
        <label>1</label>
    </ligand>
</feature>
<feature type="binding site" evidence="2">
    <location>
        <position position="66"/>
    </location>
    <ligand>
        <name>Cu(2+)</name>
        <dbReference type="ChEBI" id="CHEBI:29036"/>
        <label>1</label>
    </ligand>
</feature>
<feature type="binding site" evidence="2">
    <location>
        <position position="72"/>
    </location>
    <ligand>
        <name>Cu(2+)</name>
        <dbReference type="ChEBI" id="CHEBI:29036"/>
        <label>2</label>
    </ligand>
</feature>
<feature type="binding site" evidence="2">
    <location>
        <position position="73"/>
    </location>
    <ligand>
        <name>Cu(2+)</name>
        <dbReference type="ChEBI" id="CHEBI:29036"/>
        <label>2</label>
    </ligand>
</feature>
<feature type="binding site" evidence="2">
    <location>
        <position position="74"/>
    </location>
    <ligand>
        <name>Cu(2+)</name>
        <dbReference type="ChEBI" id="CHEBI:29036"/>
        <label>2</label>
    </ligand>
</feature>
<feature type="binding site" evidence="2">
    <location>
        <position position="80"/>
    </location>
    <ligand>
        <name>Cu(2+)</name>
        <dbReference type="ChEBI" id="CHEBI:29036"/>
        <label>3</label>
    </ligand>
</feature>
<feature type="binding site" evidence="2">
    <location>
        <position position="81"/>
    </location>
    <ligand>
        <name>Cu(2+)</name>
        <dbReference type="ChEBI" id="CHEBI:29036"/>
        <label>3</label>
    </ligand>
</feature>
<feature type="binding site" evidence="2">
    <location>
        <position position="82"/>
    </location>
    <ligand>
        <name>Cu(2+)</name>
        <dbReference type="ChEBI" id="CHEBI:29036"/>
        <label>3</label>
    </ligand>
</feature>
<feature type="binding site" evidence="2">
    <location>
        <position position="88"/>
    </location>
    <ligand>
        <name>Cu(2+)</name>
        <dbReference type="ChEBI" id="CHEBI:29036"/>
        <label>4</label>
    </ligand>
</feature>
<feature type="binding site" evidence="2">
    <location>
        <position position="90"/>
    </location>
    <ligand>
        <name>Cu(2+)</name>
        <dbReference type="ChEBI" id="CHEBI:29036"/>
        <label>4</label>
    </ligand>
</feature>
<feature type="binding site" evidence="2">
    <location>
        <position position="91"/>
    </location>
    <ligand>
        <name>Cu(2+)</name>
        <dbReference type="ChEBI" id="CHEBI:29036"/>
        <label>4</label>
    </ligand>
</feature>
<feature type="lipid moiety-binding region" description="GPI-anchor amidated alanine" evidence="4">
    <location>
        <position position="233"/>
    </location>
</feature>
<feature type="glycosylation site" description="N-linked (GlcNAc...) (complex) asparagine" evidence="11">
    <location>
        <position position="184"/>
    </location>
</feature>
<feature type="glycosylation site" description="N-linked (GlcNAc...) (complex) asparagine" evidence="11">
    <location>
        <position position="200"/>
    </location>
</feature>
<feature type="disulfide bond">
    <location>
        <begin position="182"/>
        <end position="217"/>
    </location>
</feature>
<feature type="sequence variant" evidence="14">
    <original>M</original>
    <variation>T</variation>
    <location>
        <position position="112"/>
    </location>
</feature>
<feature type="sequence variant" evidence="7">
    <original>A</original>
    <variation>T</variation>
    <location>
        <position position="136"/>
    </location>
</feature>
<feature type="sequence variant" description="In scrapie; short incubation; sA allele." evidence="7 9 12 14 17 18">
    <original>A</original>
    <variation>V</variation>
    <location>
        <position position="136"/>
    </location>
</feature>
<feature type="sequence variant" evidence="15">
    <original>M</original>
    <variation>T</variation>
    <location>
        <position position="137"/>
    </location>
</feature>
<feature type="sequence variant" evidence="7 15 17">
    <original>L</original>
    <variation>F</variation>
    <location>
        <position position="141"/>
    </location>
</feature>
<feature type="sequence variant" evidence="7 9 12 14">
    <original>R</original>
    <variation>H</variation>
    <location>
        <position position="154"/>
    </location>
</feature>
<feature type="sequence variant" description="In scrapie; low incidence." evidence="12">
    <original>R</original>
    <variation>H</variation>
    <location>
        <position position="171"/>
    </location>
</feature>
<feature type="sequence variant" evidence="7">
    <original>R</original>
    <variation>K</variation>
    <location>
        <position position="171"/>
    </location>
</feature>
<feature type="sequence variant" description="Linked to susceptibility to scrapie." evidence="6 7 8 9 10 13 16 17 18">
    <original>R</original>
    <variation>Q</variation>
    <location>
        <position position="171"/>
    </location>
</feature>
<feature type="sequence variant" evidence="15 17 18">
    <original>R</original>
    <variation>Q</variation>
    <location>
        <position position="211"/>
    </location>
</feature>
<feature type="helix" evidence="25">
    <location>
        <begin position="112"/>
        <end position="114"/>
    </location>
</feature>
<feature type="helix" evidence="25">
    <location>
        <begin position="123"/>
        <end position="126"/>
    </location>
</feature>
<feature type="strand" evidence="23">
    <location>
        <begin position="128"/>
        <end position="130"/>
    </location>
</feature>
<feature type="strand" evidence="24">
    <location>
        <begin position="131"/>
        <end position="133"/>
    </location>
</feature>
<feature type="turn" evidence="21">
    <location>
        <begin position="144"/>
        <end position="146"/>
    </location>
</feature>
<feature type="helix" evidence="22">
    <location>
        <begin position="147"/>
        <end position="155"/>
    </location>
</feature>
<feature type="helix" evidence="22">
    <location>
        <begin position="157"/>
        <end position="159"/>
    </location>
</feature>
<feature type="strand" evidence="20">
    <location>
        <begin position="165"/>
        <end position="167"/>
    </location>
</feature>
<feature type="helix" evidence="22">
    <location>
        <begin position="169"/>
        <end position="171"/>
    </location>
</feature>
<feature type="strand" evidence="22">
    <location>
        <begin position="173"/>
        <end position="175"/>
    </location>
</feature>
<feature type="helix" evidence="22">
    <location>
        <begin position="176"/>
        <end position="196"/>
    </location>
</feature>
<feature type="helix" evidence="22">
    <location>
        <begin position="203"/>
        <end position="229"/>
    </location>
</feature>
<evidence type="ECO:0000250" key="1"/>
<evidence type="ECO:0000250" key="2">
    <source>
        <dbReference type="UniProtKB" id="P04156"/>
    </source>
</evidence>
<evidence type="ECO:0000250" key="3">
    <source>
        <dbReference type="UniProtKB" id="P04925"/>
    </source>
</evidence>
<evidence type="ECO:0000255" key="4"/>
<evidence type="ECO:0000256" key="5">
    <source>
        <dbReference type="SAM" id="MobiDB-lite"/>
    </source>
</evidence>
<evidence type="ECO:0000269" key="6">
    <source>
    </source>
</evidence>
<evidence type="ECO:0000269" key="7">
    <source>
    </source>
</evidence>
<evidence type="ECO:0000269" key="8">
    <source>
    </source>
</evidence>
<evidence type="ECO:0000269" key="9">
    <source>
    </source>
</evidence>
<evidence type="ECO:0000269" key="10">
    <source>
    </source>
</evidence>
<evidence type="ECO:0000269" key="11">
    <source>
    </source>
</evidence>
<evidence type="ECO:0000269" key="12">
    <source>
    </source>
</evidence>
<evidence type="ECO:0000269" key="13">
    <source>
    </source>
</evidence>
<evidence type="ECO:0000269" key="14">
    <source>
    </source>
</evidence>
<evidence type="ECO:0000269" key="15">
    <source>
    </source>
</evidence>
<evidence type="ECO:0000269" key="16">
    <source>
    </source>
</evidence>
<evidence type="ECO:0000269" key="17">
    <source ref="8"/>
</evidence>
<evidence type="ECO:0000269" key="18">
    <source ref="9"/>
</evidence>
<evidence type="ECO:0000305" key="19"/>
<evidence type="ECO:0007829" key="20">
    <source>
        <dbReference type="PDB" id="1G04"/>
    </source>
</evidence>
<evidence type="ECO:0007829" key="21">
    <source>
        <dbReference type="PDB" id="1S4T"/>
    </source>
</evidence>
<evidence type="ECO:0007829" key="22">
    <source>
        <dbReference type="PDB" id="1UW3"/>
    </source>
</evidence>
<evidence type="ECO:0007829" key="23">
    <source>
        <dbReference type="PDB" id="1XYU"/>
    </source>
</evidence>
<evidence type="ECO:0007829" key="24">
    <source>
        <dbReference type="PDB" id="1Y2S"/>
    </source>
</evidence>
<evidence type="ECO:0007829" key="25">
    <source>
        <dbReference type="PDB" id="2N53"/>
    </source>
</evidence>
<dbReference type="EMBL" id="M31313">
    <property type="protein sequence ID" value="AAB97765.1"/>
    <property type="molecule type" value="Genomic_DNA"/>
</dbReference>
<dbReference type="EMBL" id="X79912">
    <property type="protein sequence ID" value="CAA56283.1"/>
    <property type="molecule type" value="Genomic_DNA"/>
</dbReference>
<dbReference type="EMBL" id="U67922">
    <property type="protein sequence ID" value="AAC78726.1"/>
    <property type="molecule type" value="Genomic_DNA"/>
</dbReference>
<dbReference type="EMBL" id="AJ223072">
    <property type="protein sequence ID" value="CAA11073.1"/>
    <property type="molecule type" value="Genomic_DNA"/>
</dbReference>
<dbReference type="EMBL" id="AY350241">
    <property type="protein sequence ID" value="AAR14214.1"/>
    <property type="molecule type" value="Genomic_DNA"/>
</dbReference>
<dbReference type="EMBL" id="AY350242">
    <property type="protein sequence ID" value="AAR14215.1"/>
    <property type="molecule type" value="Genomic_DNA"/>
</dbReference>
<dbReference type="EMBL" id="AY350243">
    <property type="protein sequence ID" value="AAR14216.1"/>
    <property type="molecule type" value="Genomic_DNA"/>
</dbReference>
<dbReference type="EMBL" id="AY350245">
    <property type="protein sequence ID" value="AAR14218.1"/>
    <property type="molecule type" value="Genomic_DNA"/>
</dbReference>
<dbReference type="EMBL" id="AY350246">
    <property type="protein sequence ID" value="AAR14219.1"/>
    <property type="molecule type" value="Genomic_DNA"/>
</dbReference>
<dbReference type="EMBL" id="AY350248">
    <property type="protein sequence ID" value="AAR14221.1"/>
    <property type="molecule type" value="Genomic_DNA"/>
</dbReference>
<dbReference type="EMBL" id="AY350249">
    <property type="protein sequence ID" value="AAR14222.1"/>
    <property type="molecule type" value="Genomic_DNA"/>
</dbReference>
<dbReference type="EMBL" id="AY350250">
    <property type="protein sequence ID" value="AAR14223.1"/>
    <property type="molecule type" value="Genomic_DNA"/>
</dbReference>
<dbReference type="EMBL" id="AY350254">
    <property type="protein sequence ID" value="AAR14227.1"/>
    <property type="molecule type" value="Genomic_DNA"/>
</dbReference>
<dbReference type="EMBL" id="AY350256">
    <property type="protein sequence ID" value="AAR14229.1"/>
    <property type="molecule type" value="Genomic_DNA"/>
</dbReference>
<dbReference type="EMBL" id="AY350257">
    <property type="protein sequence ID" value="AAR14230.1"/>
    <property type="molecule type" value="Genomic_DNA"/>
</dbReference>
<dbReference type="EMBL" id="AY350261">
    <property type="protein sequence ID" value="AAR14234.1"/>
    <property type="molecule type" value="Genomic_DNA"/>
</dbReference>
<dbReference type="EMBL" id="AY350264">
    <property type="protein sequence ID" value="AAR14237.1"/>
    <property type="molecule type" value="Genomic_DNA"/>
</dbReference>
<dbReference type="EMBL" id="AY350267">
    <property type="protein sequence ID" value="AAR14240.1"/>
    <property type="molecule type" value="Genomic_DNA"/>
</dbReference>
<dbReference type="EMBL" id="AY350268">
    <property type="protein sequence ID" value="AAR14241.1"/>
    <property type="molecule type" value="Genomic_DNA"/>
</dbReference>
<dbReference type="EMBL" id="AY350271">
    <property type="protein sequence ID" value="AAR14244.1"/>
    <property type="molecule type" value="Genomic_DNA"/>
</dbReference>
<dbReference type="EMBL" id="AY350272">
    <property type="protein sequence ID" value="AAR14245.1"/>
    <property type="molecule type" value="Genomic_DNA"/>
</dbReference>
<dbReference type="EMBL" id="AY350273">
    <property type="protein sequence ID" value="AAR14246.1"/>
    <property type="molecule type" value="Genomic_DNA"/>
</dbReference>
<dbReference type="EMBL" id="AY350275">
    <property type="protein sequence ID" value="AAR14248.1"/>
    <property type="molecule type" value="Genomic_DNA"/>
</dbReference>
<dbReference type="EMBL" id="AJ567984">
    <property type="protein sequence ID" value="CAE00186.1"/>
    <property type="molecule type" value="Genomic_DNA"/>
</dbReference>
<dbReference type="EMBL" id="AJ567985">
    <property type="protein sequence ID" value="CAE00187.1"/>
    <property type="molecule type" value="Genomic_DNA"/>
</dbReference>
<dbReference type="EMBL" id="AJ567986">
    <property type="protein sequence ID" value="CAE00188.2"/>
    <property type="molecule type" value="Genomic_DNA"/>
</dbReference>
<dbReference type="EMBL" id="AJ567988">
    <property type="protein sequence ID" value="CAE00190.1"/>
    <property type="molecule type" value="Genomic_DNA"/>
</dbReference>
<dbReference type="EMBL" id="D38179">
    <property type="protein sequence ID" value="BAA07376.1"/>
    <property type="molecule type" value="Genomic_DNA"/>
</dbReference>
<dbReference type="EMBL" id="AJ000680">
    <property type="protein sequence ID" value="CAA04235.1"/>
    <property type="molecule type" value="Genomic_DNA"/>
</dbReference>
<dbReference type="EMBL" id="AJ000681">
    <property type="protein sequence ID" value="CAA04236.1"/>
    <property type="molecule type" value="Genomic_DNA"/>
</dbReference>
<dbReference type="EMBL" id="AJ000736">
    <property type="protein sequence ID" value="CAA04274.1"/>
    <property type="molecule type" value="Genomic_DNA"/>
</dbReference>
<dbReference type="EMBL" id="AJ000738">
    <property type="protein sequence ID" value="CAA04276.1"/>
    <property type="molecule type" value="Genomic_DNA"/>
</dbReference>
<dbReference type="EMBL" id="AJ000739">
    <property type="protein sequence ID" value="CAA04277.1"/>
    <property type="molecule type" value="Genomic_DNA"/>
</dbReference>
<dbReference type="EMBL" id="AY907685">
    <property type="protein sequence ID" value="AAW88332.1"/>
    <property type="molecule type" value="Genomic_DNA"/>
</dbReference>
<dbReference type="EMBL" id="AY907689">
    <property type="protein sequence ID" value="AAW88336.1"/>
    <property type="molecule type" value="Genomic_DNA"/>
</dbReference>
<dbReference type="EMBL" id="AY907690">
    <property type="protein sequence ID" value="AAW88337.1"/>
    <property type="molecule type" value="Genomic_DNA"/>
</dbReference>
<dbReference type="EMBL" id="AY907691">
    <property type="protein sequence ID" value="AAW88338.1"/>
    <property type="molecule type" value="Genomic_DNA"/>
</dbReference>
<dbReference type="RefSeq" id="NP_001009481.1">
    <property type="nucleotide sequence ID" value="NM_001009481.1"/>
</dbReference>
<dbReference type="RefSeq" id="XP_012043480.1">
    <property type="nucleotide sequence ID" value="XM_012188090.2"/>
</dbReference>
<dbReference type="RefSeq" id="XP_060252821.1">
    <property type="nucleotide sequence ID" value="XM_060396838.1"/>
</dbReference>
<dbReference type="PDB" id="1G04">
    <property type="method" value="NMR"/>
    <property type="chains" value="A=145-169"/>
</dbReference>
<dbReference type="PDB" id="1M25">
    <property type="method" value="NMR"/>
    <property type="chains" value="A=145-169"/>
</dbReference>
<dbReference type="PDB" id="1S4T">
    <property type="method" value="NMR"/>
    <property type="chains" value="A=138-158"/>
</dbReference>
<dbReference type="PDB" id="1TPX">
    <property type="method" value="X-ray"/>
    <property type="resolution" value="2.56 A"/>
    <property type="chains" value="A=114-234"/>
</dbReference>
<dbReference type="PDB" id="1TQB">
    <property type="method" value="X-ray"/>
    <property type="resolution" value="2.55 A"/>
    <property type="chains" value="A=127-228"/>
</dbReference>
<dbReference type="PDB" id="1TQC">
    <property type="method" value="X-ray"/>
    <property type="resolution" value="2.80 A"/>
    <property type="chains" value="A=127-228"/>
</dbReference>
<dbReference type="PDB" id="1UW3">
    <property type="method" value="X-ray"/>
    <property type="resolution" value="2.04 A"/>
    <property type="chains" value="A=128-233"/>
</dbReference>
<dbReference type="PDB" id="1XYU">
    <property type="method" value="NMR"/>
    <property type="chains" value="A=124-234"/>
</dbReference>
<dbReference type="PDB" id="1Y2S">
    <property type="method" value="NMR"/>
    <property type="chains" value="A=124-234"/>
</dbReference>
<dbReference type="PDB" id="2KTM">
    <property type="method" value="NMR"/>
    <property type="chains" value="A=172-234"/>
</dbReference>
<dbReference type="PDB" id="2MV8">
    <property type="method" value="NMR"/>
    <property type="chains" value="A=103-234"/>
</dbReference>
<dbReference type="PDB" id="2MV9">
    <property type="method" value="NMR"/>
    <property type="chains" value="A=103-234"/>
</dbReference>
<dbReference type="PDB" id="2N53">
    <property type="method" value="NMR"/>
    <property type="chains" value="A=103-234"/>
</dbReference>
<dbReference type="PDB" id="2RMV">
    <property type="method" value="NMR"/>
    <property type="chains" value="A=145-169"/>
</dbReference>
<dbReference type="PDB" id="2RMW">
    <property type="method" value="NMR"/>
    <property type="chains" value="A=145-169"/>
</dbReference>
<dbReference type="PDBsum" id="1G04"/>
<dbReference type="PDBsum" id="1M25"/>
<dbReference type="PDBsum" id="1S4T"/>
<dbReference type="PDBsum" id="1TPX"/>
<dbReference type="PDBsum" id="1TQB"/>
<dbReference type="PDBsum" id="1TQC"/>
<dbReference type="PDBsum" id="1UW3"/>
<dbReference type="PDBsum" id="1XYU"/>
<dbReference type="PDBsum" id="1Y2S"/>
<dbReference type="PDBsum" id="2KTM"/>
<dbReference type="PDBsum" id="2MV8"/>
<dbReference type="PDBsum" id="2MV9"/>
<dbReference type="PDBsum" id="2N53"/>
<dbReference type="PDBsum" id="2RMV"/>
<dbReference type="PDBsum" id="2RMW"/>
<dbReference type="BMRB" id="P23907"/>
<dbReference type="EMDB" id="EMD-13762"/>
<dbReference type="SASBDB" id="P23907"/>
<dbReference type="SMR" id="P23907"/>
<dbReference type="DIP" id="DIP-60917N"/>
<dbReference type="IntAct" id="P23907">
    <property type="interactions" value="1"/>
</dbReference>
<dbReference type="MINT" id="P23907"/>
<dbReference type="STRING" id="9940.ENSOARP00000004991"/>
<dbReference type="BindingDB" id="P23907"/>
<dbReference type="ChEMBL" id="CHEMBL2406893"/>
<dbReference type="TCDB" id="1.C.48.1.1">
    <property type="family name" value="the prion peptide (prp) family"/>
</dbReference>
<dbReference type="GlyConnect" id="2954">
    <property type="glycosylation" value="70 N-Linked glycans (2 sites)"/>
</dbReference>
<dbReference type="GlyConnect" id="2955">
    <property type="glycosylation" value="70 N-Linked glycans (2 sites)"/>
</dbReference>
<dbReference type="GlyCosmos" id="P23907">
    <property type="glycosylation" value="2 sites, No reported glycans"/>
</dbReference>
<dbReference type="iPTMnet" id="P23907"/>
<dbReference type="PaxDb" id="9940-ENSOARP00000004991"/>
<dbReference type="ABCD" id="P23907">
    <property type="antibodies" value="1 sequenced antibody"/>
</dbReference>
<dbReference type="Ensembl" id="ENSOART00020048463">
    <property type="protein sequence ID" value="ENSOARP00020047668"/>
    <property type="gene ID" value="ENSOARG00020038714"/>
</dbReference>
<dbReference type="Ensembl" id="ENSOART00020049185">
    <property type="protein sequence ID" value="ENSOARP00020057249"/>
    <property type="gene ID" value="ENSOARG00020038714"/>
</dbReference>
<dbReference type="Ensembl" id="ENSOART00185025520">
    <property type="protein sequence ID" value="ENSOARP00185011745"/>
    <property type="gene ID" value="ENSOARG00185015852"/>
</dbReference>
<dbReference type="Ensembl" id="ENSOART00185025530">
    <property type="protein sequence ID" value="ENSOARP00185011749"/>
    <property type="gene ID" value="ENSOARG00185015852"/>
</dbReference>
<dbReference type="Ensembl" id="ENSOART00215025509">
    <property type="protein sequence ID" value="ENSOARP00215013351"/>
    <property type="gene ID" value="ENSOARG00215015165"/>
</dbReference>
<dbReference type="Ensembl" id="ENSOART00215025517">
    <property type="protein sequence ID" value="ENSOARP00215013355"/>
    <property type="gene ID" value="ENSOARG00215015165"/>
</dbReference>
<dbReference type="GeneID" id="493887"/>
<dbReference type="KEGG" id="oas:493887"/>
<dbReference type="CTD" id="5621"/>
<dbReference type="eggNOG" id="ENOG502S2A8">
    <property type="taxonomic scope" value="Eukaryota"/>
</dbReference>
<dbReference type="HOGENOM" id="CLU_094631_0_0_1"/>
<dbReference type="OMA" id="QMCTTQY"/>
<dbReference type="OrthoDB" id="9048788at2759"/>
<dbReference type="EvolutionaryTrace" id="P23907"/>
<dbReference type="PRO" id="PR:P23907"/>
<dbReference type="Proteomes" id="UP000002356">
    <property type="component" value="Chromosome 13"/>
</dbReference>
<dbReference type="Bgee" id="ENSOARG00000004668">
    <property type="expression patterns" value="Expressed in cerebellum and 52 other cell types or tissues"/>
</dbReference>
<dbReference type="ExpressionAtlas" id="P23907">
    <property type="expression patterns" value="baseline"/>
</dbReference>
<dbReference type="GO" id="GO:0005794">
    <property type="term" value="C:Golgi apparatus"/>
    <property type="evidence" value="ECO:0007669"/>
    <property type="project" value="UniProtKB-SubCell"/>
</dbReference>
<dbReference type="GO" id="GO:0005886">
    <property type="term" value="C:plasma membrane"/>
    <property type="evidence" value="ECO:0007669"/>
    <property type="project" value="UniProtKB-SubCell"/>
</dbReference>
<dbReference type="GO" id="GO:0098552">
    <property type="term" value="C:side of membrane"/>
    <property type="evidence" value="ECO:0007669"/>
    <property type="project" value="UniProtKB-KW"/>
</dbReference>
<dbReference type="GO" id="GO:0005507">
    <property type="term" value="F:copper ion binding"/>
    <property type="evidence" value="ECO:0000250"/>
    <property type="project" value="UniProtKB"/>
</dbReference>
<dbReference type="GO" id="GO:0042802">
    <property type="term" value="F:identical protein binding"/>
    <property type="evidence" value="ECO:0000353"/>
    <property type="project" value="IntAct"/>
</dbReference>
<dbReference type="GO" id="GO:0008017">
    <property type="term" value="F:microtubule binding"/>
    <property type="evidence" value="ECO:0000250"/>
    <property type="project" value="AgBase"/>
</dbReference>
<dbReference type="GO" id="GO:0015631">
    <property type="term" value="F:tubulin binding"/>
    <property type="evidence" value="ECO:0000250"/>
    <property type="project" value="AgBase"/>
</dbReference>
<dbReference type="GO" id="GO:0051260">
    <property type="term" value="P:protein homooligomerization"/>
    <property type="evidence" value="ECO:0007669"/>
    <property type="project" value="InterPro"/>
</dbReference>
<dbReference type="FunFam" id="1.10.790.10:FF:000001">
    <property type="entry name" value="Major prion protein"/>
    <property type="match status" value="1"/>
</dbReference>
<dbReference type="Gene3D" id="1.10.790.10">
    <property type="entry name" value="Prion/Doppel protein, beta-ribbon domain"/>
    <property type="match status" value="1"/>
</dbReference>
<dbReference type="InterPro" id="IPR000817">
    <property type="entry name" value="Prion"/>
</dbReference>
<dbReference type="InterPro" id="IPR036924">
    <property type="entry name" value="Prion/Doppel_b-ribbon_dom_sf"/>
</dbReference>
<dbReference type="InterPro" id="IPR022416">
    <property type="entry name" value="Prion/Doppel_prot_b-ribbon_dom"/>
</dbReference>
<dbReference type="InterPro" id="IPR020949">
    <property type="entry name" value="Prion_copper_b_octapeptide"/>
</dbReference>
<dbReference type="InterPro" id="IPR025860">
    <property type="entry name" value="Prion_N"/>
</dbReference>
<dbReference type="PANTHER" id="PTHR15506">
    <property type="entry name" value="DOPPEL PRION"/>
    <property type="match status" value="1"/>
</dbReference>
<dbReference type="PANTHER" id="PTHR15506:SF2">
    <property type="entry name" value="MAJOR PRION PROTEIN"/>
    <property type="match status" value="1"/>
</dbReference>
<dbReference type="Pfam" id="PF00377">
    <property type="entry name" value="Prion"/>
    <property type="match status" value="1"/>
</dbReference>
<dbReference type="Pfam" id="PF11587">
    <property type="entry name" value="Prion_bPrPp"/>
    <property type="match status" value="1"/>
</dbReference>
<dbReference type="Pfam" id="PF03991">
    <property type="entry name" value="Prion_octapep"/>
    <property type="match status" value="1"/>
</dbReference>
<dbReference type="PRINTS" id="PR00341">
    <property type="entry name" value="PRION"/>
</dbReference>
<dbReference type="SMART" id="SM00157">
    <property type="entry name" value="PRP"/>
    <property type="match status" value="1"/>
</dbReference>
<dbReference type="SUPFAM" id="SSF54098">
    <property type="entry name" value="Prion-like"/>
    <property type="match status" value="1"/>
</dbReference>
<dbReference type="PROSITE" id="PS00291">
    <property type="entry name" value="PRION_1"/>
    <property type="match status" value="1"/>
</dbReference>
<dbReference type="PROSITE" id="PS00706">
    <property type="entry name" value="PRION_2"/>
    <property type="match status" value="1"/>
</dbReference>
<keyword id="KW-0002">3D-structure</keyword>
<keyword id="KW-0034">Amyloid</keyword>
<keyword id="KW-1003">Cell membrane</keyword>
<keyword id="KW-0186">Copper</keyword>
<keyword id="KW-0903">Direct protein sequencing</keyword>
<keyword id="KW-0225">Disease variant</keyword>
<keyword id="KW-1015">Disulfide bond</keyword>
<keyword id="KW-0325">Glycoprotein</keyword>
<keyword id="KW-0333">Golgi apparatus</keyword>
<keyword id="KW-0336">GPI-anchor</keyword>
<keyword id="KW-0449">Lipoprotein</keyword>
<keyword id="KW-0472">Membrane</keyword>
<keyword id="KW-0479">Metal-binding</keyword>
<keyword id="KW-0640">Prion</keyword>
<keyword id="KW-1185">Reference proteome</keyword>
<keyword id="KW-0677">Repeat</keyword>
<keyword id="KW-0732">Signal</keyword>
<keyword id="KW-0862">Zinc</keyword>
<name>PRIO_SHEEP</name>
<organism>
    <name type="scientific">Ovis aries</name>
    <name type="common">Sheep</name>
    <dbReference type="NCBI Taxonomy" id="9940"/>
    <lineage>
        <taxon>Eukaryota</taxon>
        <taxon>Metazoa</taxon>
        <taxon>Chordata</taxon>
        <taxon>Craniata</taxon>
        <taxon>Vertebrata</taxon>
        <taxon>Euteleostomi</taxon>
        <taxon>Mammalia</taxon>
        <taxon>Eutheria</taxon>
        <taxon>Laurasiatheria</taxon>
        <taxon>Artiodactyla</taxon>
        <taxon>Ruminantia</taxon>
        <taxon>Pecora</taxon>
        <taxon>Bovidae</taxon>
        <taxon>Caprinae</taxon>
        <taxon>Ovis</taxon>
    </lineage>
</organism>
<gene>
    <name type="primary">PRNP</name>
    <name type="synonym">PRP</name>
    <name type="synonym">SIP</name>
</gene>
<comment type="function">
    <text evidence="2 3">Its primary physiological function is unclear. Has cytoprotective activity against internal or environmental stresses. May play a role in neuronal development and synaptic plasticity. May be required for neuronal myelin sheath maintenance. May play a role in iron uptake and iron homeostasis. Soluble oligomers are toxic to cultured neuroblastoma cells and induce apoptosis (in vitro). Association with GPC1 (via its heparan sulfate chains) targets PRNP to lipid rafts. Also provides Cu(2+) or Zn(2+) for the ascorbate-mediated GPC1 deaminase degradation of its heparan sulfate side chains (By similarity).</text>
</comment>
<comment type="subunit">
    <text evidence="2 3">Monomer and homodimer. Has a tendency to aggregate into amyloid fibrils containing a cross-beta spine, formed by a steric zipper of superposed beta-strands. Soluble oligomers may represent an intermediate stage on the path to fibril formation. Copper binding may promote oligomerization. Interacts with GRB2, APP, ERI3/PRNPIP and SYN1. Mislocalized cytosolically exposed PrP interacts with MGRN1; this interaction alters MGRN1 subcellular location and causes lysosomal enlargement. Interacts with KIAA1191.</text>
</comment>
<comment type="interaction">
    <interactant intactId="EBI-7670302">
        <id>P23907</id>
    </interactant>
    <interactant intactId="EBI-7670302">
        <id>P23907</id>
        <label>PRNP</label>
    </interactant>
    <organismsDiffer>false</organismsDiffer>
    <experiments>3</experiments>
</comment>
<comment type="interaction">
    <interactant intactId="EBI-7670302">
        <id>P23907</id>
    </interactant>
    <interactant intactId="EBI-977302">
        <id>P04156</id>
        <label>PRNP</label>
    </interactant>
    <organismsDiffer>true</organismsDiffer>
    <experiments>3</experiments>
</comment>
<comment type="subcellular location">
    <subcellularLocation>
        <location evidence="2">Cell membrane</location>
        <topology evidence="2">Lipid-anchor</topology>
        <topology evidence="2">GPI-anchor</topology>
    </subcellularLocation>
    <subcellularLocation>
        <location evidence="3">Golgi apparatus</location>
    </subcellularLocation>
    <text evidence="2">Targeted to lipid rafts via association with the heparan sulfate chains of GPC1. Colocates, in the presence of Cu(2+), to vesicles in para- and perinuclear regions, where both proteins undergo internalization. Heparin displaces PRNP from lipid rafts and promotes endocytosis.</text>
</comment>
<comment type="domain">
    <text evidence="2">The normal, monomeric form has a mainly alpha-helical structure. The disease-associated, protease-resistant form forms amyloid fibrils containing a cross-beta spine, formed by a steric zipper of superposed beta-strands. Disease mutations may favor intermolecular contacts via short beta strands, and may thereby trigger oligomerization.</text>
</comment>
<comment type="domain">
    <text evidence="2">Contains an N-terminal region composed of octamer repeats. At low copper concentrations, the sidechains of His residues from three or four repeats contribute to the binding of a single copper ion. Alternatively, a copper ion can be bound by interaction with the sidechain and backbone amide nitrogen of a single His residue. The observed copper binding stoichiometry suggests that two repeat regions cooperate to stabilize the binding of a single copper ion. At higher copper concentrations, each octamer can bind one copper ion by interactions with the His sidechain and Gly backbone atoms. A mixture of binding types may occur, especially in the case of octamer repeat expansion. Copper binding may stabilize the conformation of this region and may promote oligomerization.</text>
</comment>
<comment type="polymorphism">
    <text evidence="7">A number of amino acid polymorphism sites that influence scrapie susceptibility and transmission have been described. These are alanine to threonine or valine at codon 136, arginine to histidine at codon 154, and arginine to glutamine, histidine or lysine at codon 171. A number of allelic variants have been described based on the amino acids found at these three positions: VRQ, ARQ, AHQ, TRQ, ARK, ARR and ARH.</text>
</comment>
<comment type="disease">
    <text evidence="19">Found in high quantity in the brain of humans and animals infected with degenerative neurological diseases such as kuru, Creutzfeldt-Jakob disease (CJD), Gerstmann-Straussler syndrome (GSS), scrapie, bovine spongiform encephalopathy (BSE), transmissible mink encephalopathy (TME), etc.</text>
</comment>
<comment type="disease">
    <text evidence="9 12 14">Scrapie is a transmissible neurodegenerative disorder of sheep and goats. Most sheep that contract the disease naturally die between 24 and 50 months of age. The incubation period in sheep depends on the strain(s) of the infecting pathogen, sheep age at exposure, and the sheep genotype. Scrapie can be spread between flockmates, or it can be transmitted from an infected ewe to its lamb.</text>
</comment>
<comment type="miscellaneous">
    <text>This protein is produced by a bicistronic gene which also produces the major prion protein/PRNP from an overlapping reading frame.</text>
</comment>
<comment type="miscellaneous">
    <text evidence="1">The alternative prion protein/AltPrP (AC F7VJQ3) and PRNP have no apparent direct functional relation since a mutation that removes the start codon of the AltPrP has no apparent effect on the biology of PRNP (By similarity). In mouse and hamster, the alternative initiation AUG codon is absent and is replaced by a GUG codon.</text>
</comment>
<comment type="similarity">
    <text evidence="19">Belongs to the prion family.</text>
</comment>
<protein>
    <recommendedName>
        <fullName>Major prion protein</fullName>
        <shortName>PrP</shortName>
    </recommendedName>
    <cdAntigenName>CD230</cdAntigenName>
</protein>
<proteinExistence type="evidence at protein level"/>
<reference key="1">
    <citation type="journal article" date="1990" name="Proc. Natl. Acad. Sci. U.S.A.">
        <title>Two alleles of a neural protein gene linked to scrapie in sheep.</title>
        <authorList>
            <person name="Goldmann W."/>
            <person name="Hunter N."/>
            <person name="Foster J.D."/>
            <person name="Salbaum J.M."/>
            <person name="Beyreuther K."/>
            <person name="Hope J."/>
        </authorList>
    </citation>
    <scope>NUCLEOTIDE SEQUENCE [GENOMIC DNA]</scope>
    <scope>VARIANT GLN-171</scope>
    <source>
        <strain>Suffolk</strain>
        <tissue>Spleen</tissue>
    </source>
</reference>
<reference key="2">
    <citation type="journal article" date="1994" name="Genes Dev.">
        <title>Homozygosity for prion protein alleles encoding glutamine-171 renders sheep susceptible to natural scrapie.</title>
        <authorList>
            <person name="Westaway D."/>
            <person name="Zuliani V."/>
            <person name="Cooper C.M."/>
            <person name="da Costa M."/>
            <person name="Neuman S."/>
            <person name="Jenny A.L."/>
            <person name="Detwiler L."/>
            <person name="Prusiner S.B."/>
        </authorList>
    </citation>
    <scope>NUCLEOTIDE SEQUENCE [GENOMIC DNA]</scope>
    <scope>VARIANT GLN-171</scope>
    <source>
        <strain>Suffolk</strain>
        <tissue>Brain</tissue>
    </source>
</reference>
<reference key="3">
    <citation type="journal article" date="1998" name="Genome Res.">
        <title>Complete genomic sequence and analysis of the prion protein gene region from three mammalian species.</title>
        <authorList>
            <person name="Lee I.Y."/>
            <person name="Westaway D."/>
            <person name="Smit A.F.A."/>
            <person name="Wang K."/>
            <person name="Seto J."/>
            <person name="Chen L."/>
            <person name="Acharya C."/>
            <person name="Ankener M."/>
            <person name="Baskin D."/>
            <person name="Cooper C."/>
            <person name="Yao H."/>
            <person name="Prusiner S.B."/>
            <person name="Hood L.E."/>
        </authorList>
    </citation>
    <scope>NUCLEOTIDE SEQUENCE [GENOMIC DNA]</scope>
    <scope>VARIANT GLN-171</scope>
    <source>
        <tissue>Brain</tissue>
    </source>
</reference>
<reference key="4">
    <citation type="journal article" date="1999" name="J. Gen. Virol.">
        <title>PrP (prion) gene expression in sheep may be modulated by alternative polyadenylation of its messenger RNA.</title>
        <authorList>
            <person name="Goldmann W."/>
            <person name="O'Neill G."/>
            <person name="Cheung F."/>
            <person name="Charleson F."/>
            <person name="Ford P."/>
            <person name="Hunter N."/>
        </authorList>
    </citation>
    <scope>NUCLEOTIDE SEQUENCE [GENOMIC DNA]</scope>
    <scope>VARIANT GLN-171</scope>
</reference>
<reference key="5">
    <citation type="journal article" date="2003" name="Cytogenet. Genome Res.">
        <title>Identification of a novel ovine PrP polymorphism and scrapie-resistant genotypes for St. Croix White and a related composite breed.</title>
        <authorList>
            <person name="Seabury C.M."/>
            <person name="Derr J.N."/>
        </authorList>
    </citation>
    <scope>NUCLEOTIDE SEQUENCE [GENOMIC DNA]</scope>
    <scope>VARIANT GLN-171</scope>
</reference>
<reference key="6">
    <citation type="journal article" date="2004" name="J. Gen. Virol.">
        <title>Prion protein gene polymorphisms in healthy and scrapie affected sheep in Greece.</title>
        <authorList>
            <person name="Billinis C."/>
            <person name="Psychas V."/>
            <person name="Leontides L."/>
            <person name="Spyrou V."/>
            <person name="Argyroudis S."/>
            <person name="Vlemmas I."/>
            <person name="Leontides S."/>
            <person name="Sklaviadis T."/>
            <person name="Papadopoulos O."/>
        </authorList>
    </citation>
    <scope>NUCLEOTIDE SEQUENCE [GENOMIC DNA]</scope>
    <scope>VARIANTS THR-136; VAL-136; PHE-141; HIS-154; GLN-171 AND LYS-171</scope>
</reference>
<reference key="7">
    <citation type="submission" date="1994-09" db="EMBL/GenBank/DDBJ databases">
        <authorList>
            <person name="Inoue S."/>
            <person name="Watanabe A."/>
            <person name="Horiuchi M."/>
            <person name="Ishiguro N."/>
            <person name="Shinagawa M."/>
        </authorList>
    </citation>
    <scope>NUCLEOTIDE SEQUENCE [GENOMIC DNA]</scope>
    <source>
        <tissue>Liver</tissue>
    </source>
</reference>
<reference key="8">
    <citation type="submission" date="1997-08" db="EMBL/GenBank/DDBJ databases">
        <title>PrP allelic variants associated with natural scrapie.</title>
        <authorList>
            <person name="Bossers A."/>
        </authorList>
    </citation>
    <scope>NUCLEOTIDE SEQUENCE [GENOMIC DNA]</scope>
    <scope>VARIANTS VAL-136; PHE-141; GLN-171 AND GLN-211</scope>
</reference>
<reference key="9">
    <citation type="submission" date="2005-01" db="EMBL/GenBank/DDBJ databases">
        <title>A set of genotyping controls for 15 haplotype combinations of ovine PRNP codons 136, 154, and 171.</title>
        <authorList>
            <person name="Heaton M.P."/>
            <person name="Leymaster K.A."/>
            <person name="Clawson M.L."/>
            <person name="Laegreid W.W."/>
        </authorList>
    </citation>
    <scope>NUCLEOTIDE SEQUENCE [GENOMIC DNA]</scope>
    <scope>VARIANTS VAL-136 AND GLN-171</scope>
</reference>
<reference key="10">
    <citation type="journal article" date="2021" name="PLoS Pathog.">
        <title>Site-specific analysis of N-glycans from different sheep prion strains.</title>
        <authorList>
            <person name="Nakic N."/>
            <person name="Tran T.H."/>
            <person name="Novokmet M."/>
            <person name="Andreoletti O."/>
            <person name="Lauc G."/>
            <person name="Legname G."/>
        </authorList>
    </citation>
    <scope>PROTEIN SEQUENCE OF 160-188 AND 198-207</scope>
    <scope>GLYCOSYLATION AT ASN-184 AND ASN-200</scope>
    <scope>IDENTIFICATION BY MASS SPECTROMETRY</scope>
</reference>
<reference key="11">
    <citation type="journal article" date="2005" name="Biochem. J.">
        <title>The epididymal soluble prion protein forms a high-molecular-mass complex in association with hydrophobic proteins.</title>
        <authorList>
            <person name="Ecroyd H."/>
            <person name="Belghazi M."/>
            <person name="Dacheux J.-L."/>
            <person name="Gatti J.-L."/>
        </authorList>
    </citation>
    <scope>IDENTIFICATION IN COMPLEX WITH CES5A; CLU; BPI; MANBA AND GLB1</scope>
    <source>
        <tissue>Epididymis</tissue>
    </source>
</reference>
<reference key="12">
    <citation type="journal article" date="2004" name="J. Mol. Biol.">
        <title>The crystal structure of the globular domain of sheep prion protein.</title>
        <authorList>
            <person name="Haire L.F."/>
            <person name="Whyte S.M."/>
            <person name="Vasisht N."/>
            <person name="Gill A.C."/>
            <person name="Verma C."/>
            <person name="Dodson E.J."/>
            <person name="Dodson G.G."/>
            <person name="Bayley P.M."/>
        </authorList>
    </citation>
    <scope>X-RAY CRYSTALLOGRAPHY (2.0 ANGSTROMS) OF 128-233</scope>
</reference>
<reference key="13">
    <citation type="journal article" date="2004" name="Proc. Natl. Acad. Sci. U.S.A.">
        <title>Insight into the PrPC--&gt;PrPSc conversion from the structures of antibody-bound ovine prion scrapie-susceptibility variants.</title>
        <authorList>
            <person name="Eghiaian F."/>
            <person name="Grosclaude J."/>
            <person name="Lesceu S."/>
            <person name="Debey P."/>
            <person name="Doublet B."/>
            <person name="Treguer E."/>
            <person name="Rezaei H."/>
            <person name="Knossow M."/>
        </authorList>
    </citation>
    <scope>X-RAY CRYSTALLOGRAPHY (2.56 ANGSTROMS) OF 115-234 IN COMPLEX WITH ANTIBODY</scope>
</reference>
<reference key="14">
    <citation type="journal article" date="2005" name="Proc. Natl. Acad. Sci. U.S.A.">
        <title>Prion protein NMR structures of cats, dogs, pigs, and sheep.</title>
        <authorList>
            <person name="Lysek D.A."/>
            <person name="Schorn C."/>
            <person name="Nivon L.G."/>
            <person name="Esteve-Moya V."/>
            <person name="Christen B."/>
            <person name="Calzolai L."/>
            <person name="von Schroetter C."/>
            <person name="Fiorito F."/>
            <person name="Herrmann T."/>
            <person name="Guentert P."/>
            <person name="Wuethrich K."/>
        </authorList>
    </citation>
    <scope>STRUCTURE BY NMR OF 124-234</scope>
</reference>
<reference key="15">
    <citation type="journal article" date="2010" name="J. Biol. Chem.">
        <title>Prion fibrillization is mediated by a native structural element that comprises helices H2 and H3.</title>
        <authorList>
            <person name="Adrover M."/>
            <person name="Pauwels K."/>
            <person name="Prigent S."/>
            <person name="de Chiara C."/>
            <person name="Xu Z."/>
            <person name="Chapuis C."/>
            <person name="Pastore A."/>
            <person name="Rezaei H."/>
        </authorList>
    </citation>
    <scope>STRUCTURE BY NMR OF 167-234</scope>
    <scope>SUBUNIT</scope>
    <scope>DOMAIN</scope>
</reference>
<reference key="16">
    <citation type="journal article" date="1991" name="J. Gen. Virol.">
        <title>Different scrapie-associated fibril proteins (PrP) are encoded by lines of sheep selected for different alleles of the Sip gene.</title>
        <authorList>
            <person name="Goldmann W."/>
            <person name="Hunter N."/>
            <person name="Benson G."/>
            <person name="Foster J.D."/>
            <person name="Hope J."/>
        </authorList>
    </citation>
    <scope>VARIANTS SCRAPIE VAL-136; HIS-154 AND GLN-171</scope>
    <scope>POLYMORPHISM</scope>
</reference>
<reference key="17">
    <citation type="journal article" date="1993" name="Genomics">
        <title>PrP polymorphisms associated with natural scrapie discovered by denaturing gradient gel electrophoresis.</title>
        <authorList>
            <person name="Laplanche J.-L."/>
            <person name="Chatelain J."/>
            <person name="Westaway D."/>
            <person name="Thomas S."/>
            <person name="Dussaucy M."/>
            <person name="Brugere-Picoux J."/>
            <person name="Launay J.-M."/>
        </authorList>
    </citation>
    <scope>VARIANTS SCRAPIE THR-112; VAL-136 AND HIS-154</scope>
</reference>
<reference key="18">
    <citation type="journal article" date="1995" name="J. Gen. Virol.">
        <title>Identification of five allelic variants of the sheep PrP gene and their association with natural scrapie.</title>
        <authorList>
            <person name="Belt P.B.G.M."/>
            <person name="Muileman I.H."/>
            <person name="Schreuder B.E.C."/>
            <person name="Bos-De Ruijter J."/>
            <person name="Gielkens A.L.J."/>
            <person name="Smits M.A."/>
        </authorList>
    </citation>
    <scope>VARIANTS SCRAPIE VAL-136 AND HIS-171</scope>
    <scope>VARIANT HIS-154</scope>
</reference>
<reference key="19">
    <citation type="journal article" date="1996" name="J. Gen. Virol.">
        <title>PrP genotype contributes to determining survival times of sheep with natural scrapie.</title>
        <authorList>
            <person name="Bossers A."/>
            <person name="Schreuder B.E.C."/>
            <person name="Muileman I.H."/>
            <person name="Belt P.B.G.M."/>
            <person name="Smits M.A."/>
        </authorList>
    </citation>
    <scope>VARIANTS THR-137; PHE-141 AND GLN-211</scope>
</reference>